<feature type="chain" id="PRO_1000072314" description="Putative pterin-4-alpha-carbinolamine dehydratase">
    <location>
        <begin position="1"/>
        <end position="109"/>
    </location>
</feature>
<comment type="catalytic activity">
    <reaction evidence="1">
        <text>(4aS,6R)-4a-hydroxy-L-erythro-5,6,7,8-tetrahydrobiopterin = (6R)-L-erythro-6,7-dihydrobiopterin + H2O</text>
        <dbReference type="Rhea" id="RHEA:11920"/>
        <dbReference type="ChEBI" id="CHEBI:15377"/>
        <dbReference type="ChEBI" id="CHEBI:15642"/>
        <dbReference type="ChEBI" id="CHEBI:43120"/>
        <dbReference type="EC" id="4.2.1.96"/>
    </reaction>
</comment>
<comment type="similarity">
    <text evidence="1">Belongs to the pterin-4-alpha-carbinolamine dehydratase family.</text>
</comment>
<accession>A1WWH9</accession>
<sequence length="109" mass="12364">MSLTDKTCVPCQGGVAPMDRQQAEQMLVQVPEWSLDTDARMIYRRFKFRNFIDALSFVNRVTEVAEAEDHHPDILLGYGYAEVRIQTHKIEGLHENDFILAAKVDALGA</sequence>
<name>PHS_HALHL</name>
<organism>
    <name type="scientific">Halorhodospira halophila (strain DSM 244 / SL1)</name>
    <name type="common">Ectothiorhodospira halophila (strain DSM 244 / SL1)</name>
    <dbReference type="NCBI Taxonomy" id="349124"/>
    <lineage>
        <taxon>Bacteria</taxon>
        <taxon>Pseudomonadati</taxon>
        <taxon>Pseudomonadota</taxon>
        <taxon>Gammaproteobacteria</taxon>
        <taxon>Chromatiales</taxon>
        <taxon>Ectothiorhodospiraceae</taxon>
        <taxon>Halorhodospira</taxon>
    </lineage>
</organism>
<reference key="1">
    <citation type="submission" date="2006-12" db="EMBL/GenBank/DDBJ databases">
        <title>Complete sequence of Halorhodospira halophila SL1.</title>
        <authorList>
            <consortium name="US DOE Joint Genome Institute"/>
            <person name="Copeland A."/>
            <person name="Lucas S."/>
            <person name="Lapidus A."/>
            <person name="Barry K."/>
            <person name="Detter J.C."/>
            <person name="Glavina del Rio T."/>
            <person name="Hammon N."/>
            <person name="Israni S."/>
            <person name="Dalin E."/>
            <person name="Tice H."/>
            <person name="Pitluck S."/>
            <person name="Saunders E."/>
            <person name="Brettin T."/>
            <person name="Bruce D."/>
            <person name="Han C."/>
            <person name="Tapia R."/>
            <person name="Schmutz J."/>
            <person name="Larimer F."/>
            <person name="Land M."/>
            <person name="Hauser L."/>
            <person name="Kyrpides N."/>
            <person name="Mikhailova N."/>
            <person name="Hoff W."/>
            <person name="Richardson P."/>
        </authorList>
    </citation>
    <scope>NUCLEOTIDE SEQUENCE [LARGE SCALE GENOMIC DNA]</scope>
    <source>
        <strain>DSM 244 / SL1</strain>
    </source>
</reference>
<evidence type="ECO:0000255" key="1">
    <source>
        <dbReference type="HAMAP-Rule" id="MF_00434"/>
    </source>
</evidence>
<dbReference type="EC" id="4.2.1.96" evidence="1"/>
<dbReference type="EMBL" id="CP000544">
    <property type="protein sequence ID" value="ABM62041.1"/>
    <property type="molecule type" value="Genomic_DNA"/>
</dbReference>
<dbReference type="RefSeq" id="WP_011814064.1">
    <property type="nucleotide sequence ID" value="NC_008789.1"/>
</dbReference>
<dbReference type="SMR" id="A1WWH9"/>
<dbReference type="STRING" id="349124.Hhal_1266"/>
<dbReference type="KEGG" id="hha:Hhal_1266"/>
<dbReference type="eggNOG" id="COG2154">
    <property type="taxonomic scope" value="Bacteria"/>
</dbReference>
<dbReference type="HOGENOM" id="CLU_081974_2_2_6"/>
<dbReference type="OrthoDB" id="5294615at2"/>
<dbReference type="Proteomes" id="UP000000647">
    <property type="component" value="Chromosome"/>
</dbReference>
<dbReference type="GO" id="GO:0008124">
    <property type="term" value="F:4-alpha-hydroxytetrahydrobiopterin dehydratase activity"/>
    <property type="evidence" value="ECO:0007669"/>
    <property type="project" value="UniProtKB-UniRule"/>
</dbReference>
<dbReference type="GO" id="GO:0006729">
    <property type="term" value="P:tetrahydrobiopterin biosynthetic process"/>
    <property type="evidence" value="ECO:0007669"/>
    <property type="project" value="InterPro"/>
</dbReference>
<dbReference type="CDD" id="cd00913">
    <property type="entry name" value="PCD_DCoH_subfamily_a"/>
    <property type="match status" value="1"/>
</dbReference>
<dbReference type="Gene3D" id="3.30.1360.20">
    <property type="entry name" value="Transcriptional coactivator/pterin dehydratase"/>
    <property type="match status" value="1"/>
</dbReference>
<dbReference type="HAMAP" id="MF_00434">
    <property type="entry name" value="Pterin_4_alpha"/>
    <property type="match status" value="1"/>
</dbReference>
<dbReference type="InterPro" id="IPR036428">
    <property type="entry name" value="PCD_sf"/>
</dbReference>
<dbReference type="InterPro" id="IPR001533">
    <property type="entry name" value="Pterin_deHydtase"/>
</dbReference>
<dbReference type="PANTHER" id="PTHR12599">
    <property type="entry name" value="PTERIN-4-ALPHA-CARBINOLAMINE DEHYDRATASE"/>
    <property type="match status" value="1"/>
</dbReference>
<dbReference type="PANTHER" id="PTHR12599:SF0">
    <property type="entry name" value="PTERIN-4-ALPHA-CARBINOLAMINE DEHYDRATASE"/>
    <property type="match status" value="1"/>
</dbReference>
<dbReference type="Pfam" id="PF01329">
    <property type="entry name" value="Pterin_4a"/>
    <property type="match status" value="1"/>
</dbReference>
<dbReference type="SUPFAM" id="SSF55248">
    <property type="entry name" value="PCD-like"/>
    <property type="match status" value="1"/>
</dbReference>
<proteinExistence type="inferred from homology"/>
<keyword id="KW-0456">Lyase</keyword>
<keyword id="KW-1185">Reference proteome</keyword>
<protein>
    <recommendedName>
        <fullName evidence="1">Putative pterin-4-alpha-carbinolamine dehydratase</fullName>
        <shortName evidence="1">PHS</shortName>
        <ecNumber evidence="1">4.2.1.96</ecNumber>
    </recommendedName>
    <alternativeName>
        <fullName evidence="1">4-alpha-hydroxy-tetrahydropterin dehydratase</fullName>
    </alternativeName>
    <alternativeName>
        <fullName evidence="1">Pterin carbinolamine dehydratase</fullName>
        <shortName evidence="1">PCD</shortName>
    </alternativeName>
</protein>
<gene>
    <name type="ordered locus">Hhal_1266</name>
</gene>